<evidence type="ECO:0000255" key="1"/>
<evidence type="ECO:0000305" key="2"/>
<protein>
    <recommendedName>
        <fullName>Uncharacterized protein ML1222</fullName>
    </recommendedName>
</protein>
<feature type="chain" id="PRO_0000103893" description="Uncharacterized protein ML1222">
    <location>
        <begin position="1"/>
        <end position="198"/>
    </location>
</feature>
<feature type="transmembrane region" description="Helical" evidence="1">
    <location>
        <begin position="20"/>
        <end position="40"/>
    </location>
</feature>
<feature type="transmembrane region" description="Helical" evidence="1">
    <location>
        <begin position="70"/>
        <end position="90"/>
    </location>
</feature>
<feature type="transmembrane region" description="Helical" evidence="1">
    <location>
        <begin position="107"/>
        <end position="127"/>
    </location>
</feature>
<feature type="transmembrane region" description="Helical" evidence="1">
    <location>
        <begin position="164"/>
        <end position="184"/>
    </location>
</feature>
<comment type="subcellular location">
    <subcellularLocation>
        <location evidence="2">Cell membrane</location>
        <topology evidence="2">Multi-pass membrane protein</topology>
    </subcellularLocation>
</comment>
<comment type="similarity">
    <text evidence="2">To M.tuberculosis Rv1591.</text>
</comment>
<keyword id="KW-1003">Cell membrane</keyword>
<keyword id="KW-0472">Membrane</keyword>
<keyword id="KW-1185">Reference proteome</keyword>
<keyword id="KW-0812">Transmembrane</keyword>
<keyword id="KW-1133">Transmembrane helix</keyword>
<dbReference type="EMBL" id="U00010">
    <property type="protein sequence ID" value="AAA17073.1"/>
    <property type="molecule type" value="Genomic_DNA"/>
</dbReference>
<dbReference type="EMBL" id="AL583921">
    <property type="protein sequence ID" value="CAC31603.1"/>
    <property type="molecule type" value="Genomic_DNA"/>
</dbReference>
<dbReference type="PIR" id="S72709">
    <property type="entry name" value="S72709"/>
</dbReference>
<dbReference type="RefSeq" id="NP_301885.1">
    <property type="nucleotide sequence ID" value="NC_002677.1"/>
</dbReference>
<dbReference type="RefSeq" id="WP_010908206.1">
    <property type="nucleotide sequence ID" value="NC_002677.1"/>
</dbReference>
<dbReference type="STRING" id="272631.gene:17575053"/>
<dbReference type="KEGG" id="mle:ML1222"/>
<dbReference type="PATRIC" id="fig|272631.5.peg.2242"/>
<dbReference type="Leproma" id="ML1222"/>
<dbReference type="eggNOG" id="ENOG50325BP">
    <property type="taxonomic scope" value="Bacteria"/>
</dbReference>
<dbReference type="HOGENOM" id="CLU_102917_0_0_11"/>
<dbReference type="OrthoDB" id="4761780at2"/>
<dbReference type="Proteomes" id="UP000000806">
    <property type="component" value="Chromosome"/>
</dbReference>
<dbReference type="GO" id="GO:0005886">
    <property type="term" value="C:plasma membrane"/>
    <property type="evidence" value="ECO:0007669"/>
    <property type="project" value="UniProtKB-SubCell"/>
</dbReference>
<dbReference type="InterPro" id="IPR021213">
    <property type="entry name" value="DUF2567"/>
</dbReference>
<dbReference type="Pfam" id="PF10821">
    <property type="entry name" value="DUF2567"/>
    <property type="match status" value="1"/>
</dbReference>
<proteinExistence type="predicted"/>
<gene>
    <name type="ordered locus">ML1222</name>
    <name type="ORF">B1170_C3_229</name>
</gene>
<sequence>MTEHCASDISDVSCPPRGRVIVGVVLGLAGTGALIGGLWAWIAPPIHAVVGLTRTGERGHDYLGNESEHFFVAPCLMLGLLTVLAVTASVLAWQLRQHRGPGMVIGLAIGLMICAATAAAVGALLVWMRYGALNFDAVPLSYDHKVAHVIQAPPVFFAHGLLQVAATVLWPAGIAALVYAVLAAANGRDDLGGRLCSR</sequence>
<name>Y1222_MYCLE</name>
<accession>Q49626</accession>
<organism>
    <name type="scientific">Mycobacterium leprae (strain TN)</name>
    <dbReference type="NCBI Taxonomy" id="272631"/>
    <lineage>
        <taxon>Bacteria</taxon>
        <taxon>Bacillati</taxon>
        <taxon>Actinomycetota</taxon>
        <taxon>Actinomycetes</taxon>
        <taxon>Mycobacteriales</taxon>
        <taxon>Mycobacteriaceae</taxon>
        <taxon>Mycobacterium</taxon>
    </lineage>
</organism>
<reference key="1">
    <citation type="submission" date="1994-03" db="EMBL/GenBank/DDBJ databases">
        <authorList>
            <person name="Smith D.R."/>
            <person name="Robison K."/>
        </authorList>
    </citation>
    <scope>NUCLEOTIDE SEQUENCE [GENOMIC DNA]</scope>
</reference>
<reference key="2">
    <citation type="journal article" date="2001" name="Nature">
        <title>Massive gene decay in the leprosy bacillus.</title>
        <authorList>
            <person name="Cole S.T."/>
            <person name="Eiglmeier K."/>
            <person name="Parkhill J."/>
            <person name="James K.D."/>
            <person name="Thomson N.R."/>
            <person name="Wheeler P.R."/>
            <person name="Honore N."/>
            <person name="Garnier T."/>
            <person name="Churcher C.M."/>
            <person name="Harris D.E."/>
            <person name="Mungall K.L."/>
            <person name="Basham D."/>
            <person name="Brown D."/>
            <person name="Chillingworth T."/>
            <person name="Connor R."/>
            <person name="Davies R.M."/>
            <person name="Devlin K."/>
            <person name="Duthoy S."/>
            <person name="Feltwell T."/>
            <person name="Fraser A."/>
            <person name="Hamlin N."/>
            <person name="Holroyd S."/>
            <person name="Hornsby T."/>
            <person name="Jagels K."/>
            <person name="Lacroix C."/>
            <person name="Maclean J."/>
            <person name="Moule S."/>
            <person name="Murphy L.D."/>
            <person name="Oliver K."/>
            <person name="Quail M.A."/>
            <person name="Rajandream M.A."/>
            <person name="Rutherford K.M."/>
            <person name="Rutter S."/>
            <person name="Seeger K."/>
            <person name="Simon S."/>
            <person name="Simmonds M."/>
            <person name="Skelton J."/>
            <person name="Squares R."/>
            <person name="Squares S."/>
            <person name="Stevens K."/>
            <person name="Taylor K."/>
            <person name="Whitehead S."/>
            <person name="Woodward J.R."/>
            <person name="Barrell B.G."/>
        </authorList>
    </citation>
    <scope>NUCLEOTIDE SEQUENCE [LARGE SCALE GENOMIC DNA]</scope>
    <source>
        <strain>TN</strain>
    </source>
</reference>